<feature type="chain" id="PRO_0000419408" description="Protein PA-X">
    <location>
        <begin position="1"/>
        <end position="252"/>
    </location>
</feature>
<feature type="active site" evidence="2">
    <location>
        <position position="80"/>
    </location>
</feature>
<feature type="active site" evidence="2">
    <location>
        <position position="108"/>
    </location>
</feature>
<feature type="site" description="Important for efficient shutoff activity and nuclear localization" evidence="4">
    <location>
        <position position="195"/>
    </location>
</feature>
<feature type="site" description="Important for efficient shutoff activity and nuclear localization" evidence="4">
    <location>
        <position position="198"/>
    </location>
</feature>
<feature type="site" description="Important for efficient shutoff activity and nuclear localization" evidence="4">
    <location>
        <position position="199"/>
    </location>
</feature>
<feature type="site" description="Important for efficient shutoff activity" evidence="3">
    <location>
        <position position="202"/>
    </location>
</feature>
<feature type="site" description="Important for efficient shutoff activity" evidence="3">
    <location>
        <position position="203"/>
    </location>
</feature>
<feature type="site" description="Important for efficient shutoff activity" evidence="3">
    <location>
        <position position="206"/>
    </location>
</feature>
<comment type="function">
    <text evidence="1 4">Plays a major role in the shutoff of the host protein expression by cleaving mRNAs probably via an endonuclease activity. This host shutoff allows the virus to escape from the host antiviral response (By similarity). Hijacks host RNA splicing machinery to selectively target host RNAs containing introns for destruction. This may explain the preferential degradation of RNAs that have undergone co- or post-transcriptional processing (By similarity).</text>
</comment>
<comment type="subcellular location">
    <subcellularLocation>
        <location evidence="4">Host cytoplasm</location>
    </subcellularLocation>
    <subcellularLocation>
        <location evidence="4">Host nucleus</location>
    </subcellularLocation>
</comment>
<comment type="alternative products">
    <event type="ribosomal frameshifting"/>
    <isoform>
        <id>P0DJU5-1</id>
        <name>PA-X</name>
        <sequence type="displayed"/>
    </isoform>
    <isoform>
        <id>Q6DNX7-1</id>
        <name>PA</name>
        <sequence type="external"/>
    </isoform>
</comment>
<comment type="domain">
    <text evidence="1 4">The probable endonuclease active site in the N-terminus and the basic amino acid cluster in the C-terminus are important for the shutoff activity. The C-terminus acts as a nuclear localization signal (By similarity). The C-terminus is recruited to host protein complexes involved in nuclear Pol II RNA processing (By similarity).</text>
</comment>
<comment type="similarity">
    <text evidence="5">Belongs to the influenza viruses PA-X family.</text>
</comment>
<proteinExistence type="inferred from homology"/>
<dbReference type="EMBL" id="AY651625">
    <property type="status" value="NOT_ANNOTATED_CDS"/>
    <property type="molecule type" value="Genomic_RNA"/>
</dbReference>
<dbReference type="SMR" id="P0DJU5"/>
<dbReference type="IntAct" id="P0DJU5">
    <property type="interactions" value="1"/>
</dbReference>
<dbReference type="GO" id="GO:0003723">
    <property type="term" value="F:RNA binding"/>
    <property type="evidence" value="ECO:0007669"/>
    <property type="project" value="InterPro"/>
</dbReference>
<dbReference type="GO" id="GO:0039694">
    <property type="term" value="P:viral RNA genome replication"/>
    <property type="evidence" value="ECO:0007669"/>
    <property type="project" value="InterPro"/>
</dbReference>
<dbReference type="GO" id="GO:0075523">
    <property type="term" value="P:viral translational frameshifting"/>
    <property type="evidence" value="ECO:0007669"/>
    <property type="project" value="UniProtKB-KW"/>
</dbReference>
<dbReference type="FunFam" id="3.40.91.90:FF:000001">
    <property type="entry name" value="Polymerase acidic protein"/>
    <property type="match status" value="1"/>
</dbReference>
<dbReference type="Gene3D" id="3.40.91.90">
    <property type="entry name" value="Influenza RNA-dependent RNA polymerase subunit PA, endonuclease domain"/>
    <property type="match status" value="1"/>
</dbReference>
<dbReference type="InterPro" id="IPR001009">
    <property type="entry name" value="PA/PA-X"/>
</dbReference>
<dbReference type="InterPro" id="IPR038372">
    <property type="entry name" value="PA/PA-X_sf"/>
</dbReference>
<dbReference type="Pfam" id="PF00603">
    <property type="entry name" value="Flu_PA"/>
    <property type="match status" value="1"/>
</dbReference>
<gene>
    <name type="primary">PA</name>
</gene>
<name>PAX_I02A4</name>
<accession>P0DJU5</accession>
<keyword id="KW-1132">Decay of host mRNAs by virus</keyword>
<keyword id="KW-1262">Eukaryotic host gene expression shutoff by virus</keyword>
<keyword id="KW-1035">Host cytoplasm</keyword>
<keyword id="KW-1190">Host gene expression shutoff by virus</keyword>
<keyword id="KW-1192">Host mRNA suppression by virus</keyword>
<keyword id="KW-1048">Host nucleus</keyword>
<keyword id="KW-0945">Host-virus interaction</keyword>
<keyword id="KW-0688">Ribosomal frameshifting</keyword>
<organism>
    <name type="scientific">Influenza A virus (strain A/Silky Chicken/Hong Kong/YU100/2002 H5N1 genotype X3)</name>
    <dbReference type="NCBI Taxonomy" id="284214"/>
    <lineage>
        <taxon>Viruses</taxon>
        <taxon>Riboviria</taxon>
        <taxon>Orthornavirae</taxon>
        <taxon>Negarnaviricota</taxon>
        <taxon>Polyploviricotina</taxon>
        <taxon>Insthoviricetes</taxon>
        <taxon>Articulavirales</taxon>
        <taxon>Orthomyxoviridae</taxon>
        <taxon>Alphainfluenzavirus</taxon>
        <taxon>Alphainfluenzavirus influenzae</taxon>
        <taxon>Influenza A virus</taxon>
    </lineage>
</organism>
<sequence>MEDFVRQCFNPMIVELAEKAMKEYGEDPKIETNKFAAICTHLEVCFMYSDFHFIDERGESIIVESGDPNALLKHRFEIIEGRDRTMAWTVVNSICNTTGVEKPKFLPDLYDYKENRFIEIGVTRREVHIYYLEKANKIKSEKTHIHIFSFTGEEMATKSDYTLDEESRARIKTRLFTIRQEMASRGLWDSFVSPKEAKRQLKKDLKLQEPCAGLPTKVSHRTSPALKTLEPMWMDSNRTAALRASFLKCQKR</sequence>
<reference key="1">
    <citation type="journal article" date="2004" name="Nature">
        <title>Genesis of a highly pathogenic and potentially pandemic H5N1 influenza virus in eastern Asia.</title>
        <authorList>
            <person name="Li K.S."/>
            <person name="Guan Y."/>
            <person name="Wang J."/>
            <person name="Smith G.J.D."/>
            <person name="Xu K.M."/>
            <person name="Duan L."/>
            <person name="Rahardjo A.P."/>
            <person name="Puthavathana P."/>
            <person name="Buranathai C."/>
            <person name="Nguyen T.D."/>
            <person name="Estoepangestie A.T.S."/>
            <person name="Chaisingh A."/>
            <person name="Auewarakul P."/>
            <person name="Long H.T."/>
            <person name="Hanh N.T.H."/>
            <person name="Webby R.J."/>
            <person name="Poon L.L.M."/>
            <person name="Chen H."/>
            <person name="Shortridge K.F."/>
            <person name="Yuen K.Y."/>
            <person name="Webster R.G."/>
            <person name="Peiris J.S.M."/>
        </authorList>
    </citation>
    <scope>NUCLEOTIDE SEQUENCE [GENOMIC RNA]</scope>
</reference>
<organismHost>
    <name type="scientific">Aves</name>
    <dbReference type="NCBI Taxonomy" id="8782"/>
</organismHost>
<organismHost>
    <name type="scientific">Felis catus</name>
    <name type="common">Cat</name>
    <name type="synonym">Felis silvestris catus</name>
    <dbReference type="NCBI Taxonomy" id="9685"/>
</organismHost>
<organismHost>
    <name type="scientific">Homo sapiens</name>
    <name type="common">Human</name>
    <dbReference type="NCBI Taxonomy" id="9606"/>
</organismHost>
<organismHost>
    <name type="scientific">Panthera pardus</name>
    <name type="common">Leopard</name>
    <name type="synonym">Felis pardus</name>
    <dbReference type="NCBI Taxonomy" id="9691"/>
</organismHost>
<organismHost>
    <name type="scientific">Panthera tigris</name>
    <name type="common">Tiger</name>
    <dbReference type="NCBI Taxonomy" id="9694"/>
</organismHost>
<organismHost>
    <name type="scientific">Sus scrofa</name>
    <name type="common">Pig</name>
    <dbReference type="NCBI Taxonomy" id="9823"/>
</organismHost>
<evidence type="ECO:0000250" key="1">
    <source>
        <dbReference type="UniProtKB" id="P0CK64"/>
    </source>
</evidence>
<evidence type="ECO:0000250" key="2">
    <source>
        <dbReference type="UniProtKB" id="P0CK68"/>
    </source>
</evidence>
<evidence type="ECO:0000250" key="3">
    <source>
        <dbReference type="UniProtKB" id="P0DJW8"/>
    </source>
</evidence>
<evidence type="ECO:0000250" key="4">
    <source>
        <dbReference type="UniProtKB" id="P0DXO5"/>
    </source>
</evidence>
<evidence type="ECO:0000305" key="5"/>
<protein>
    <recommendedName>
        <fullName>Protein PA-X</fullName>
    </recommendedName>
</protein>